<protein>
    <recommendedName>
        <fullName>Methyl-accepting chemotaxis protein I</fullName>
        <shortName>MCP-I</shortName>
    </recommendedName>
    <alternativeName>
        <fullName>Serine chemoreceptor protein</fullName>
    </alternativeName>
</protein>
<feature type="chain" id="PRO_0000110537" description="Methyl-accepting chemotaxis protein I">
    <location>
        <begin position="1"/>
        <end position="551"/>
    </location>
</feature>
<feature type="topological domain" description="Cytoplasmic" evidence="1">
    <location>
        <begin position="1"/>
        <end position="6"/>
    </location>
</feature>
<feature type="transmembrane region" description="Helical" evidence="1">
    <location>
        <begin position="7"/>
        <end position="30"/>
    </location>
</feature>
<feature type="topological domain" description="Periplasmic" evidence="1">
    <location>
        <begin position="31"/>
        <end position="190"/>
    </location>
</feature>
<feature type="transmembrane region" description="Helical" evidence="1">
    <location>
        <begin position="191"/>
        <end position="210"/>
    </location>
</feature>
<feature type="topological domain" description="Cytoplasmic" evidence="1">
    <location>
        <begin position="211"/>
        <end position="551"/>
    </location>
</feature>
<feature type="domain" description="HAMP" evidence="2">
    <location>
        <begin position="216"/>
        <end position="268"/>
    </location>
</feature>
<feature type="domain" description="Methyl-accepting transducer" evidence="3">
    <location>
        <begin position="273"/>
        <end position="502"/>
    </location>
</feature>
<feature type="region of interest" description="The 3 Arg may form a positively charged pocket, which binds the alpha-carboxyl group of the attractant AA">
    <location>
        <begin position="64"/>
        <end position="73"/>
    </location>
</feature>
<feature type="modified residue" description="Glutamate methyl ester (Gln)" evidence="5 7">
    <location>
        <position position="297"/>
    </location>
</feature>
<feature type="modified residue" description="Glutamate methyl ester (Glu)" evidence="5 7">
    <location>
        <position position="304"/>
    </location>
</feature>
<feature type="modified residue" description="Glutamate methyl ester (Gln)" evidence="5 7">
    <location>
        <position position="311"/>
    </location>
</feature>
<feature type="modified residue" description="Glutamate methyl ester (Glu)" evidence="5 7">
    <location>
        <position position="493"/>
    </location>
</feature>
<feature type="modified residue" description="Glutamate methyl ester (Glu)" evidence="5">
    <location>
        <position position="502"/>
    </location>
</feature>
<feature type="helix" evidence="10">
    <location>
        <begin position="25"/>
        <end position="78"/>
    </location>
</feature>
<feature type="helix" evidence="10">
    <location>
        <begin position="87"/>
        <end position="110"/>
    </location>
</feature>
<feature type="helix" evidence="10">
    <location>
        <begin position="119"/>
        <end position="144"/>
    </location>
</feature>
<feature type="helix" evidence="10">
    <location>
        <begin position="148"/>
        <end position="153"/>
    </location>
</feature>
<feature type="helix" evidence="10">
    <location>
        <begin position="156"/>
        <end position="186"/>
    </location>
</feature>
<feature type="helix" evidence="9">
    <location>
        <begin position="296"/>
        <end position="328"/>
    </location>
</feature>
<feature type="helix" evidence="9">
    <location>
        <begin position="332"/>
        <end position="360"/>
    </location>
</feature>
<feature type="helix" evidence="9">
    <location>
        <begin position="362"/>
        <end position="388"/>
    </location>
</feature>
<feature type="helix" evidence="9">
    <location>
        <begin position="390"/>
        <end position="392"/>
    </location>
</feature>
<feature type="helix" evidence="9">
    <location>
        <begin position="393"/>
        <end position="438"/>
    </location>
</feature>
<feature type="helix" evidence="9">
    <location>
        <begin position="441"/>
        <end position="448"/>
    </location>
</feature>
<feature type="turn" evidence="9">
    <location>
        <begin position="449"/>
        <end position="451"/>
    </location>
</feature>
<feature type="helix" evidence="9">
    <location>
        <begin position="452"/>
        <end position="515"/>
    </location>
</feature>
<keyword id="KW-0002">3D-structure</keyword>
<keyword id="KW-0997">Cell inner membrane</keyword>
<keyword id="KW-1003">Cell membrane</keyword>
<keyword id="KW-0145">Chemotaxis</keyword>
<keyword id="KW-0903">Direct protein sequencing</keyword>
<keyword id="KW-0472">Membrane</keyword>
<keyword id="KW-0488">Methylation</keyword>
<keyword id="KW-1185">Reference proteome</keyword>
<keyword id="KW-0807">Transducer</keyword>
<keyword id="KW-0812">Transmembrane</keyword>
<keyword id="KW-1133">Transmembrane helix</keyword>
<proteinExistence type="evidence at protein level"/>
<comment type="function">
    <text>Receptor for the attractant L-serine and related amino acids. Is also responsible for chemotaxis away from a wide range of repellents, including leucine, indole, and weak acids.</text>
</comment>
<comment type="function">
    <text>Chemotactic-signal transducers respond to changes in the concentration of attractants and repellents in the environment, transduce a signal from the outside to the inside of the cell, and facilitate sensory adaptation through the variation of the level of methylation. Attractants increase the level of methylation while repellents decrease the level of methylation, the methyl groups are added by the methyltransferase CheR and removed by the methylesterase CheB.</text>
</comment>
<comment type="subcellular location">
    <subcellularLocation>
        <location evidence="4 6">Cell inner membrane</location>
        <topology evidence="4 6">Multi-pass membrane protein</topology>
    </subcellularLocation>
    <text>Found predominantly at cell poles.</text>
</comment>
<comment type="similarity">
    <text evidence="8">Belongs to the methyl-accepting chemotaxis (MCP) protein family.</text>
</comment>
<evidence type="ECO:0000255" key="1"/>
<evidence type="ECO:0000255" key="2">
    <source>
        <dbReference type="PROSITE-ProRule" id="PRU00102"/>
    </source>
</evidence>
<evidence type="ECO:0000255" key="3">
    <source>
        <dbReference type="PROSITE-ProRule" id="PRU00284"/>
    </source>
</evidence>
<evidence type="ECO:0000269" key="4">
    <source>
    </source>
</evidence>
<evidence type="ECO:0000269" key="5">
    <source>
    </source>
</evidence>
<evidence type="ECO:0000269" key="6">
    <source>
    </source>
</evidence>
<evidence type="ECO:0000269" key="7">
    <source>
    </source>
</evidence>
<evidence type="ECO:0000305" key="8"/>
<evidence type="ECO:0007829" key="9">
    <source>
        <dbReference type="PDB" id="1QU7"/>
    </source>
</evidence>
<evidence type="ECO:0007829" key="10">
    <source>
        <dbReference type="PDB" id="2D4U"/>
    </source>
</evidence>
<sequence>MLKRIKIVTSLLLVLAVFGLLQLTSGGLFFNALKNDKENFTVLQTIRQQQSTLNGSWVALLQTRNTLNRAGIRYMMDQNNIGSGSTVAELMESASISLKQAEKNWADYEALPRDPRQSTAAAAEIKRNYDIYHNALAELIQLLGAGKINEFFDQPTQGYQDGFEKQYVAYMEQNDRLHDIAVSDNNASYSQAMWILVGVMIVVLAVIFAVWFGIKASLVAPMNRLIDSIRHIAGGDLVKPIEVDGSNEMGQLAESLRHMQGELMRTVGDVRNGANAIYSGASEIATGNNDLSSRTEQQAASLEETAASMEQLTATVKQNAENARQASHLALSASETAQRGGKVVDNVVQTMRDISTSSQKIADIISVIDGIAFQTNILALNAAVEAARAGEQGRGFAVVAGEVRNLAQRSAQAAREIKSLIEDSVGKVDVGSTLVESAGETMAEIVSAVTRVTDIMGEIASASDEQSRGIDQVGLAVAEMDRVTQQNAALVEESAAAAAALEEQASRLTEAVAVFRIQQQQRETSAVVKTVTPAAPRKMAVADSEENWETF</sequence>
<organism>
    <name type="scientific">Escherichia coli (strain K12)</name>
    <dbReference type="NCBI Taxonomy" id="83333"/>
    <lineage>
        <taxon>Bacteria</taxon>
        <taxon>Pseudomonadati</taxon>
        <taxon>Pseudomonadota</taxon>
        <taxon>Gammaproteobacteria</taxon>
        <taxon>Enterobacterales</taxon>
        <taxon>Enterobacteriaceae</taxon>
        <taxon>Escherichia</taxon>
    </lineage>
</organism>
<name>MCP1_ECOLI</name>
<gene>
    <name type="primary">tsr</name>
    <name type="synonym">cheD</name>
    <name type="ordered locus">b4355</name>
    <name type="ordered locus">JW4318</name>
</gene>
<dbReference type="EMBL" id="V00373">
    <property type="protein sequence ID" value="CAA23676.1"/>
    <property type="status" value="ALT_SEQ"/>
    <property type="molecule type" value="Genomic_DNA"/>
</dbReference>
<dbReference type="EMBL" id="U14003">
    <property type="protein sequence ID" value="AAA97252.1"/>
    <property type="molecule type" value="Genomic_DNA"/>
</dbReference>
<dbReference type="EMBL" id="U00096">
    <property type="protein sequence ID" value="AAC77311.1"/>
    <property type="molecule type" value="Genomic_DNA"/>
</dbReference>
<dbReference type="EMBL" id="AP009048">
    <property type="protein sequence ID" value="BAE78345.1"/>
    <property type="molecule type" value="Genomic_DNA"/>
</dbReference>
<dbReference type="EMBL" id="S56952">
    <property type="protein sequence ID" value="AAB25802.1"/>
    <property type="molecule type" value="Genomic_DNA"/>
</dbReference>
<dbReference type="PIR" id="E65250">
    <property type="entry name" value="QRECS"/>
</dbReference>
<dbReference type="RefSeq" id="NP_418775.1">
    <property type="nucleotide sequence ID" value="NC_000913.3"/>
</dbReference>
<dbReference type="RefSeq" id="WP_000919536.1">
    <property type="nucleotide sequence ID" value="NZ_LN832404.1"/>
</dbReference>
<dbReference type="PDB" id="1QU7">
    <property type="method" value="X-ray"/>
    <property type="resolution" value="2.60 A"/>
    <property type="chains" value="A/B=294-520"/>
</dbReference>
<dbReference type="PDB" id="2D4U">
    <property type="method" value="X-ray"/>
    <property type="resolution" value="1.95 A"/>
    <property type="chains" value="A/B=25-190"/>
</dbReference>
<dbReference type="PDB" id="3ATP">
    <property type="method" value="X-ray"/>
    <property type="resolution" value="2.50 A"/>
    <property type="chains" value="A/B=25-190"/>
</dbReference>
<dbReference type="PDB" id="3ZX6">
    <property type="method" value="X-ray"/>
    <property type="resolution" value="2.65 A"/>
    <property type="chains" value="A/B=264-551"/>
</dbReference>
<dbReference type="PDB" id="6S1K">
    <property type="method" value="EM"/>
    <property type="resolution" value="8.38 A"/>
    <property type="chains" value="E/F/G/H/I/J/K/L/M/N/O/P=1-551"/>
</dbReference>
<dbReference type="PDB" id="8C5V">
    <property type="method" value="EM"/>
    <property type="resolution" value="12.00 A"/>
    <property type="chains" value="I/J/K/L/M/N/O/P/Q/R/S/T=1-516"/>
</dbReference>
<dbReference type="PDBsum" id="1QU7"/>
<dbReference type="PDBsum" id="2D4U"/>
<dbReference type="PDBsum" id="3ATP"/>
<dbReference type="PDBsum" id="3ZX6"/>
<dbReference type="PDBsum" id="6S1K"/>
<dbReference type="PDBsum" id="8C5V"/>
<dbReference type="SMR" id="P02942"/>
<dbReference type="BioGRID" id="4261744">
    <property type="interactions" value="206"/>
</dbReference>
<dbReference type="BioGRID" id="853162">
    <property type="interactions" value="1"/>
</dbReference>
<dbReference type="DIP" id="DIP-11046N"/>
<dbReference type="FunCoup" id="P02942">
    <property type="interactions" value="337"/>
</dbReference>
<dbReference type="IntAct" id="P02942">
    <property type="interactions" value="4"/>
</dbReference>
<dbReference type="MINT" id="P02942"/>
<dbReference type="STRING" id="511145.b4355"/>
<dbReference type="PaxDb" id="511145-b4355"/>
<dbReference type="EnsemblBacteria" id="AAC77311">
    <property type="protein sequence ID" value="AAC77311"/>
    <property type="gene ID" value="b4355"/>
</dbReference>
<dbReference type="GeneID" id="948884"/>
<dbReference type="KEGG" id="ecj:JW4318"/>
<dbReference type="KEGG" id="eco:b4355"/>
<dbReference type="KEGG" id="ecoc:C3026_23530"/>
<dbReference type="PATRIC" id="fig|1411691.4.peg.2331"/>
<dbReference type="EchoBASE" id="EB1027"/>
<dbReference type="eggNOG" id="COG0840">
    <property type="taxonomic scope" value="Bacteria"/>
</dbReference>
<dbReference type="HOGENOM" id="CLU_000445_107_16_6"/>
<dbReference type="InParanoid" id="P02942"/>
<dbReference type="OMA" id="HMQNELI"/>
<dbReference type="OrthoDB" id="9765776at2"/>
<dbReference type="PhylomeDB" id="P02942"/>
<dbReference type="BioCyc" id="EcoCyc:TSR-MONOMER"/>
<dbReference type="EvolutionaryTrace" id="P02942"/>
<dbReference type="PRO" id="PR:P02942"/>
<dbReference type="Proteomes" id="UP000000625">
    <property type="component" value="Chromosome"/>
</dbReference>
<dbReference type="GO" id="GO:0098561">
    <property type="term" value="C:methyl accepting chemotaxis protein complex"/>
    <property type="evidence" value="ECO:0000315"/>
    <property type="project" value="UniProtKB"/>
</dbReference>
<dbReference type="GO" id="GO:0005886">
    <property type="term" value="C:plasma membrane"/>
    <property type="evidence" value="ECO:0000315"/>
    <property type="project" value="UniProtKB"/>
</dbReference>
<dbReference type="GO" id="GO:0042802">
    <property type="term" value="F:identical protein binding"/>
    <property type="evidence" value="ECO:0000353"/>
    <property type="project" value="UniProtKB"/>
</dbReference>
<dbReference type="GO" id="GO:0004888">
    <property type="term" value="F:transmembrane signaling receptor activity"/>
    <property type="evidence" value="ECO:0000318"/>
    <property type="project" value="GO_Central"/>
</dbReference>
<dbReference type="GO" id="GO:0048870">
    <property type="term" value="P:cell motility"/>
    <property type="evidence" value="ECO:0000315"/>
    <property type="project" value="CACAO"/>
</dbReference>
<dbReference type="GO" id="GO:0071230">
    <property type="term" value="P:cellular response to amino acid stimulus"/>
    <property type="evidence" value="ECO:0000315"/>
    <property type="project" value="UniProtKB"/>
</dbReference>
<dbReference type="GO" id="GO:0006935">
    <property type="term" value="P:chemotaxis"/>
    <property type="evidence" value="ECO:0000315"/>
    <property type="project" value="CACAO"/>
</dbReference>
<dbReference type="GO" id="GO:0009593">
    <property type="term" value="P:detection of chemical stimulus"/>
    <property type="evidence" value="ECO:0000315"/>
    <property type="project" value="UniProtKB"/>
</dbReference>
<dbReference type="GO" id="GO:0051260">
    <property type="term" value="P:protein homooligomerization"/>
    <property type="evidence" value="ECO:0000315"/>
    <property type="project" value="UniProtKB"/>
</dbReference>
<dbReference type="GO" id="GO:0070206">
    <property type="term" value="P:protein trimerization"/>
    <property type="evidence" value="ECO:0000315"/>
    <property type="project" value="UniProtKB"/>
</dbReference>
<dbReference type="GO" id="GO:0043113">
    <property type="term" value="P:receptor clustering"/>
    <property type="evidence" value="ECO:0000315"/>
    <property type="project" value="UniProtKB"/>
</dbReference>
<dbReference type="GO" id="GO:1902021">
    <property type="term" value="P:regulation of bacterial-type flagellum-dependent cell motility"/>
    <property type="evidence" value="ECO:0000315"/>
    <property type="project" value="UniProtKB"/>
</dbReference>
<dbReference type="GO" id="GO:0050920">
    <property type="term" value="P:regulation of chemotaxis"/>
    <property type="evidence" value="ECO:0000315"/>
    <property type="project" value="UniProtKB"/>
</dbReference>
<dbReference type="GO" id="GO:0032110">
    <property type="term" value="P:regulation of protein histidine kinase activity"/>
    <property type="evidence" value="ECO:0000315"/>
    <property type="project" value="UniProtKB"/>
</dbReference>
<dbReference type="GO" id="GO:0007172">
    <property type="term" value="P:signal complex assembly"/>
    <property type="evidence" value="ECO:0000315"/>
    <property type="project" value="UniProtKB"/>
</dbReference>
<dbReference type="GO" id="GO:0007165">
    <property type="term" value="P:signal transduction"/>
    <property type="evidence" value="ECO:0000315"/>
    <property type="project" value="CACAO"/>
</dbReference>
<dbReference type="CDD" id="cd06225">
    <property type="entry name" value="HAMP"/>
    <property type="match status" value="1"/>
</dbReference>
<dbReference type="CDD" id="cd11386">
    <property type="entry name" value="MCP_signal"/>
    <property type="match status" value="1"/>
</dbReference>
<dbReference type="CDD" id="cd19407">
    <property type="entry name" value="Tar_Tsr_sensor"/>
    <property type="match status" value="1"/>
</dbReference>
<dbReference type="FunFam" id="1.20.120.30:FF:000002">
    <property type="entry name" value="Methyl-accepting chemotaxis protein I"/>
    <property type="match status" value="1"/>
</dbReference>
<dbReference type="FunFam" id="1.10.287.950:FF:000001">
    <property type="entry name" value="Methyl-accepting chemotaxis sensory transducer"/>
    <property type="match status" value="1"/>
</dbReference>
<dbReference type="Gene3D" id="1.20.120.30">
    <property type="entry name" value="Aspartate receptor, ligand-binding domain"/>
    <property type="match status" value="1"/>
</dbReference>
<dbReference type="Gene3D" id="1.10.287.950">
    <property type="entry name" value="Methyl-accepting chemotaxis protein"/>
    <property type="match status" value="1"/>
</dbReference>
<dbReference type="InterPro" id="IPR035440">
    <property type="entry name" value="4HB_MCP_dom_sf"/>
</dbReference>
<dbReference type="InterPro" id="IPR004090">
    <property type="entry name" value="Chemotax_Me-accpt_rcpt"/>
</dbReference>
<dbReference type="InterPro" id="IPR004091">
    <property type="entry name" value="Chemotax_Me-accpt_rcpt_Me-site"/>
</dbReference>
<dbReference type="InterPro" id="IPR003660">
    <property type="entry name" value="HAMP_dom"/>
</dbReference>
<dbReference type="InterPro" id="IPR051310">
    <property type="entry name" value="MCP_chemotaxis"/>
</dbReference>
<dbReference type="InterPro" id="IPR004089">
    <property type="entry name" value="MCPsignal_dom"/>
</dbReference>
<dbReference type="InterPro" id="IPR003122">
    <property type="entry name" value="Tar_rcpt_lig-bd"/>
</dbReference>
<dbReference type="NCBIfam" id="NF011615">
    <property type="entry name" value="PRK15041.1"/>
    <property type="match status" value="1"/>
</dbReference>
<dbReference type="PANTHER" id="PTHR43531:SF14">
    <property type="entry name" value="METHYL-ACCEPTING CHEMOTAXIS PROTEIN I-RELATED"/>
    <property type="match status" value="1"/>
</dbReference>
<dbReference type="PANTHER" id="PTHR43531">
    <property type="entry name" value="PROTEIN ICFG"/>
    <property type="match status" value="1"/>
</dbReference>
<dbReference type="Pfam" id="PF00672">
    <property type="entry name" value="HAMP"/>
    <property type="match status" value="1"/>
</dbReference>
<dbReference type="Pfam" id="PF00015">
    <property type="entry name" value="MCPsignal"/>
    <property type="match status" value="1"/>
</dbReference>
<dbReference type="Pfam" id="PF02203">
    <property type="entry name" value="TarH"/>
    <property type="match status" value="1"/>
</dbReference>
<dbReference type="PRINTS" id="PR00260">
    <property type="entry name" value="CHEMTRNSDUCR"/>
</dbReference>
<dbReference type="SMART" id="SM00304">
    <property type="entry name" value="HAMP"/>
    <property type="match status" value="1"/>
</dbReference>
<dbReference type="SMART" id="SM00283">
    <property type="entry name" value="MA"/>
    <property type="match status" value="1"/>
</dbReference>
<dbReference type="SMART" id="SM00319">
    <property type="entry name" value="TarH"/>
    <property type="match status" value="1"/>
</dbReference>
<dbReference type="SUPFAM" id="SSF47170">
    <property type="entry name" value="Aspartate receptor, ligand-binding domain"/>
    <property type="match status" value="1"/>
</dbReference>
<dbReference type="SUPFAM" id="SSF58104">
    <property type="entry name" value="Methyl-accepting chemotaxis protein (MCP) signaling domain"/>
    <property type="match status" value="1"/>
</dbReference>
<dbReference type="PROSITE" id="PS00538">
    <property type="entry name" value="CHEMOTAXIS_TRANSDUC_1"/>
    <property type="match status" value="1"/>
</dbReference>
<dbReference type="PROSITE" id="PS50111">
    <property type="entry name" value="CHEMOTAXIS_TRANSDUC_2"/>
    <property type="match status" value="1"/>
</dbReference>
<dbReference type="PROSITE" id="PS50885">
    <property type="entry name" value="HAMP"/>
    <property type="match status" value="1"/>
</dbReference>
<accession>P02942</accession>
<accession>P76817</accession>
<accession>Q2M5W1</accession>
<reference key="1">
    <citation type="journal article" date="1983" name="Nature">
        <title>Structure of the serine chemoreceptor in Escherichia coli.</title>
        <authorList>
            <person name="Boyd A."/>
            <person name="Kendall K."/>
            <person name="Simon M.I."/>
        </authorList>
    </citation>
    <scope>NUCLEOTIDE SEQUENCE [GENOMIC DNA]</scope>
</reference>
<reference key="2">
    <citation type="journal article" date="1995" name="Nucleic Acids Res.">
        <title>Analysis of the Escherichia coli genome VI: DNA sequence of the region from 92.8 through 100 minutes.</title>
        <authorList>
            <person name="Burland V.D."/>
            <person name="Plunkett G. III"/>
            <person name="Sofia H.J."/>
            <person name="Daniels D.L."/>
            <person name="Blattner F.R."/>
        </authorList>
    </citation>
    <scope>NUCLEOTIDE SEQUENCE [LARGE SCALE GENOMIC DNA]</scope>
    <source>
        <strain>K12 / MG1655 / ATCC 47076</strain>
    </source>
</reference>
<reference key="3">
    <citation type="journal article" date="1997" name="Science">
        <title>The complete genome sequence of Escherichia coli K-12.</title>
        <authorList>
            <person name="Blattner F.R."/>
            <person name="Plunkett G. III"/>
            <person name="Bloch C.A."/>
            <person name="Perna N.T."/>
            <person name="Burland V."/>
            <person name="Riley M."/>
            <person name="Collado-Vides J."/>
            <person name="Glasner J.D."/>
            <person name="Rode C.K."/>
            <person name="Mayhew G.F."/>
            <person name="Gregor J."/>
            <person name="Davis N.W."/>
            <person name="Kirkpatrick H.A."/>
            <person name="Goeden M.A."/>
            <person name="Rose D.J."/>
            <person name="Mau B."/>
            <person name="Shao Y."/>
        </authorList>
    </citation>
    <scope>NUCLEOTIDE SEQUENCE [LARGE SCALE GENOMIC DNA]</scope>
    <source>
        <strain>K12 / MG1655 / ATCC 47076</strain>
    </source>
</reference>
<reference key="4">
    <citation type="journal article" date="2006" name="Mol. Syst. Biol.">
        <title>Highly accurate genome sequences of Escherichia coli K-12 strains MG1655 and W3110.</title>
        <authorList>
            <person name="Hayashi K."/>
            <person name="Morooka N."/>
            <person name="Yamamoto Y."/>
            <person name="Fujita K."/>
            <person name="Isono K."/>
            <person name="Choi S."/>
            <person name="Ohtsubo E."/>
            <person name="Baba T."/>
            <person name="Wanner B.L."/>
            <person name="Mori H."/>
            <person name="Horiuchi T."/>
        </authorList>
    </citation>
    <scope>NUCLEOTIDE SEQUENCE [LARGE SCALE GENOMIC DNA]</scope>
    <source>
        <strain>K12 / W3110 / ATCC 27325 / DSM 5911</strain>
    </source>
</reference>
<reference key="5">
    <citation type="journal article" date="1993" name="Mol. Gen. Genet.">
        <title>The Escherichia coli C homoprotocatechuate degradative operon: hpc gene order, direction of transcription and control of expression.</title>
        <authorList>
            <person name="Roper D.I."/>
            <person name="Fawcett T."/>
            <person name="Cooper R.A."/>
        </authorList>
    </citation>
    <scope>NUCLEOTIDE SEQUENCE [GENOMIC DNA] OF 1-77</scope>
    <source>
        <strain>C</strain>
    </source>
</reference>
<reference key="6">
    <citation type="journal article" date="1982" name="J. Biol. Chem.">
        <title>The methyl-accepting chemotaxis proteins of Escherichia coli. Identification of the multiple methylation sites on methyl-accepting chemotaxis protein I.</title>
        <authorList>
            <person name="Kehry M.R."/>
            <person name="Dahlquist F.W."/>
        </authorList>
    </citation>
    <scope>PROTEIN SEQUENCE OF 295-317 AND 483-507</scope>
    <scope>METHYLATION</scope>
</reference>
<reference key="7">
    <citation type="journal article" date="1991" name="J. Biol. Chem.">
        <title>Sites of deamidation and methylation in Tsr, a bacterial chemotaxis sensory transducer.</title>
        <authorList>
            <person name="Rice M.S."/>
            <person name="Dahlquist F.W."/>
        </authorList>
    </citation>
    <scope>METHYLATION AT GLN-297; GLU-304; GLN-311; GLU-493 AND GLU-502</scope>
    <scope>DEAMIDATION AT GLN-297 AND GLN-311</scope>
</reference>
<reference key="8">
    <citation type="journal article" date="1997" name="Electrophoresis">
        <title>Escherichia coli proteome analysis using the gene-protein database.</title>
        <authorList>
            <person name="VanBogelen R.A."/>
            <person name="Abshire K.Z."/>
            <person name="Moldover B."/>
            <person name="Olson E.R."/>
            <person name="Neidhardt F.C."/>
        </authorList>
    </citation>
    <scope>IDENTIFICATION BY 2D-GEL</scope>
</reference>
<reference key="9">
    <citation type="journal article" date="2005" name="Science">
        <title>Global topology analysis of the Escherichia coli inner membrane proteome.</title>
        <authorList>
            <person name="Daley D.O."/>
            <person name="Rapp M."/>
            <person name="Granseth E."/>
            <person name="Melen K."/>
            <person name="Drew D."/>
            <person name="von Heijne G."/>
        </authorList>
    </citation>
    <scope>SUBCELLULAR LOCATION</scope>
    <source>
        <strain>K12 / MG1655 / ATCC 47076</strain>
    </source>
</reference>
<reference key="10">
    <citation type="journal article" date="2012" name="Mol. Microbiol.">
        <title>Isolation and identification of new inner membrane-associated proteins that localize to cell poles in Escherichia coli.</title>
        <authorList>
            <person name="Li G."/>
            <person name="Young K.D."/>
        </authorList>
    </citation>
    <scope>SUBCELLULAR LOCATION</scope>
    <source>
        <strain>K12 / MG1655 / ATCC 47076</strain>
    </source>
</reference>
<reference key="11">
    <citation type="journal article" date="1999" name="Nature">
        <title>Four-helical-bundle structure of the cytoplasmic domain of a serine chemotaxis receptor.</title>
        <authorList>
            <person name="Kim K.K."/>
            <person name="Yokota H."/>
            <person name="Kim S.-H."/>
        </authorList>
    </citation>
    <scope>X-RAY CRYSTALLOGRAPHY (2.6 ANGSTROMS) OF 294-520</scope>
</reference>